<dbReference type="EC" id="2.1.1.192" evidence="1"/>
<dbReference type="EMBL" id="CP001146">
    <property type="protein sequence ID" value="ACI18998.1"/>
    <property type="molecule type" value="Genomic_DNA"/>
</dbReference>
<dbReference type="RefSeq" id="WP_012547630.1">
    <property type="nucleotide sequence ID" value="NC_011297.1"/>
</dbReference>
<dbReference type="SMR" id="B5YF42"/>
<dbReference type="STRING" id="309799.DICTH_1331"/>
<dbReference type="PaxDb" id="309799-DICTH_1331"/>
<dbReference type="KEGG" id="dth:DICTH_1331"/>
<dbReference type="eggNOG" id="COG0820">
    <property type="taxonomic scope" value="Bacteria"/>
</dbReference>
<dbReference type="HOGENOM" id="CLU_029101_0_1_0"/>
<dbReference type="OrthoDB" id="9793973at2"/>
<dbReference type="Proteomes" id="UP000001733">
    <property type="component" value="Chromosome"/>
</dbReference>
<dbReference type="GO" id="GO:0005737">
    <property type="term" value="C:cytoplasm"/>
    <property type="evidence" value="ECO:0007669"/>
    <property type="project" value="UniProtKB-SubCell"/>
</dbReference>
<dbReference type="GO" id="GO:0051539">
    <property type="term" value="F:4 iron, 4 sulfur cluster binding"/>
    <property type="evidence" value="ECO:0007669"/>
    <property type="project" value="UniProtKB-UniRule"/>
</dbReference>
<dbReference type="GO" id="GO:0046872">
    <property type="term" value="F:metal ion binding"/>
    <property type="evidence" value="ECO:0007669"/>
    <property type="project" value="UniProtKB-KW"/>
</dbReference>
<dbReference type="GO" id="GO:0070040">
    <property type="term" value="F:rRNA (adenine(2503)-C2-)-methyltransferase activity"/>
    <property type="evidence" value="ECO:0007669"/>
    <property type="project" value="UniProtKB-UniRule"/>
</dbReference>
<dbReference type="GO" id="GO:0019843">
    <property type="term" value="F:rRNA binding"/>
    <property type="evidence" value="ECO:0007669"/>
    <property type="project" value="UniProtKB-UniRule"/>
</dbReference>
<dbReference type="GO" id="GO:0002935">
    <property type="term" value="F:tRNA (adenine(37)-C2)-methyltransferase activity"/>
    <property type="evidence" value="ECO:0007669"/>
    <property type="project" value="UniProtKB-UniRule"/>
</dbReference>
<dbReference type="GO" id="GO:0000049">
    <property type="term" value="F:tRNA binding"/>
    <property type="evidence" value="ECO:0007669"/>
    <property type="project" value="UniProtKB-UniRule"/>
</dbReference>
<dbReference type="GO" id="GO:0070475">
    <property type="term" value="P:rRNA base methylation"/>
    <property type="evidence" value="ECO:0007669"/>
    <property type="project" value="UniProtKB-UniRule"/>
</dbReference>
<dbReference type="GO" id="GO:0030488">
    <property type="term" value="P:tRNA methylation"/>
    <property type="evidence" value="ECO:0007669"/>
    <property type="project" value="UniProtKB-UniRule"/>
</dbReference>
<dbReference type="CDD" id="cd01335">
    <property type="entry name" value="Radical_SAM"/>
    <property type="match status" value="1"/>
</dbReference>
<dbReference type="FunFam" id="3.20.20.70:FF:000014">
    <property type="entry name" value="Probable dual-specificity RNA methyltransferase RlmN"/>
    <property type="match status" value="1"/>
</dbReference>
<dbReference type="Gene3D" id="1.10.150.530">
    <property type="match status" value="1"/>
</dbReference>
<dbReference type="Gene3D" id="3.20.20.70">
    <property type="entry name" value="Aldolase class I"/>
    <property type="match status" value="1"/>
</dbReference>
<dbReference type="HAMAP" id="MF_01849">
    <property type="entry name" value="RNA_methyltr_RlmN"/>
    <property type="match status" value="1"/>
</dbReference>
<dbReference type="InterPro" id="IPR013785">
    <property type="entry name" value="Aldolase_TIM"/>
</dbReference>
<dbReference type="InterPro" id="IPR006638">
    <property type="entry name" value="Elp3/MiaA/NifB-like_rSAM"/>
</dbReference>
<dbReference type="InterPro" id="IPR040072">
    <property type="entry name" value="Methyltransferase_A"/>
</dbReference>
<dbReference type="InterPro" id="IPR048641">
    <property type="entry name" value="RlmN_N"/>
</dbReference>
<dbReference type="InterPro" id="IPR027492">
    <property type="entry name" value="RNA_MTrfase_RlmN"/>
</dbReference>
<dbReference type="InterPro" id="IPR004383">
    <property type="entry name" value="rRNA_lsu_MTrfase_RlmN/Cfr"/>
</dbReference>
<dbReference type="InterPro" id="IPR007197">
    <property type="entry name" value="rSAM"/>
</dbReference>
<dbReference type="NCBIfam" id="TIGR00048">
    <property type="entry name" value="rRNA_mod_RlmN"/>
    <property type="match status" value="1"/>
</dbReference>
<dbReference type="PANTHER" id="PTHR30544">
    <property type="entry name" value="23S RRNA METHYLTRANSFERASE"/>
    <property type="match status" value="1"/>
</dbReference>
<dbReference type="PANTHER" id="PTHR30544:SF5">
    <property type="entry name" value="RADICAL SAM CORE DOMAIN-CONTAINING PROTEIN"/>
    <property type="match status" value="1"/>
</dbReference>
<dbReference type="Pfam" id="PF04055">
    <property type="entry name" value="Radical_SAM"/>
    <property type="match status" value="1"/>
</dbReference>
<dbReference type="Pfam" id="PF21016">
    <property type="entry name" value="RlmN_N"/>
    <property type="match status" value="1"/>
</dbReference>
<dbReference type="PIRSF" id="PIRSF006004">
    <property type="entry name" value="CHP00048"/>
    <property type="match status" value="1"/>
</dbReference>
<dbReference type="SFLD" id="SFLDF00275">
    <property type="entry name" value="adenosine_C2_methyltransferase"/>
    <property type="match status" value="1"/>
</dbReference>
<dbReference type="SFLD" id="SFLDG01062">
    <property type="entry name" value="methyltransferase_(Class_A)"/>
    <property type="match status" value="1"/>
</dbReference>
<dbReference type="SMART" id="SM00729">
    <property type="entry name" value="Elp3"/>
    <property type="match status" value="1"/>
</dbReference>
<dbReference type="SUPFAM" id="SSF102114">
    <property type="entry name" value="Radical SAM enzymes"/>
    <property type="match status" value="1"/>
</dbReference>
<dbReference type="PROSITE" id="PS51918">
    <property type="entry name" value="RADICAL_SAM"/>
    <property type="match status" value="1"/>
</dbReference>
<reference key="1">
    <citation type="journal article" date="2014" name="Genome Announc.">
        <title>Complete Genome Sequence of the Extreme Thermophile Dictyoglomus thermophilum H-6-12.</title>
        <authorList>
            <person name="Coil D.A."/>
            <person name="Badger J.H."/>
            <person name="Forberger H.C."/>
            <person name="Riggs F."/>
            <person name="Madupu R."/>
            <person name="Fedorova N."/>
            <person name="Ward N."/>
            <person name="Robb F.T."/>
            <person name="Eisen J.A."/>
        </authorList>
    </citation>
    <scope>NUCLEOTIDE SEQUENCE [LARGE SCALE GENOMIC DNA]</scope>
    <source>
        <strain>ATCC 35947 / DSM 3960 / H-6-12</strain>
    </source>
</reference>
<keyword id="KW-0004">4Fe-4S</keyword>
<keyword id="KW-0963">Cytoplasm</keyword>
<keyword id="KW-1015">Disulfide bond</keyword>
<keyword id="KW-0408">Iron</keyword>
<keyword id="KW-0411">Iron-sulfur</keyword>
<keyword id="KW-0479">Metal-binding</keyword>
<keyword id="KW-0489">Methyltransferase</keyword>
<keyword id="KW-0698">rRNA processing</keyword>
<keyword id="KW-0949">S-adenosyl-L-methionine</keyword>
<keyword id="KW-0808">Transferase</keyword>
<keyword id="KW-0819">tRNA processing</keyword>
<sequence>MNNILSFDIDEIRDILRGWGEPSYRADQIFDWVYKKLILNPSSMTNLPKGLRQKIAEYFSFDIPKVVKITGEGNTKKYLLELEDGENIETVLISHKNRNTVCVSVQVGCAIGCKFCATGLVGLRRNLNTHEIVGQIILIQKELFEKGDRISNVVYMGMGEPLLNYDNVVKSIRIINREWGLNIGSKHITLSTIGIVPKIYQLGEEDLKVRLAISLHAPNNELRSKIIPINKEYPIEKLLESAFYYAEKTGRRVTFEYVLIKNFNDREEHAIELAGLLKNKPVHVNLIPWNKVPEYPWETSDLKDIFKFKKILSDAGINVTLRISYGSRIKAGCGQLRALYLKSKGELK</sequence>
<name>RLMN_DICT6</name>
<proteinExistence type="inferred from homology"/>
<protein>
    <recommendedName>
        <fullName evidence="1">Probable dual-specificity RNA methyltransferase RlmN</fullName>
        <ecNumber evidence="1">2.1.1.192</ecNumber>
    </recommendedName>
    <alternativeName>
        <fullName evidence="1">23S rRNA (adenine(2503)-C(2))-methyltransferase</fullName>
    </alternativeName>
    <alternativeName>
        <fullName evidence="1">23S rRNA m2A2503 methyltransferase</fullName>
    </alternativeName>
    <alternativeName>
        <fullName evidence="1">Ribosomal RNA large subunit methyltransferase N</fullName>
    </alternativeName>
    <alternativeName>
        <fullName evidence="1">tRNA (adenine(37)-C(2))-methyltransferase</fullName>
    </alternativeName>
    <alternativeName>
        <fullName evidence="1">tRNA m2A37 methyltransferase</fullName>
    </alternativeName>
</protein>
<organism>
    <name type="scientific">Dictyoglomus thermophilum (strain ATCC 35947 / DSM 3960 / H-6-12)</name>
    <dbReference type="NCBI Taxonomy" id="309799"/>
    <lineage>
        <taxon>Bacteria</taxon>
        <taxon>Pseudomonadati</taxon>
        <taxon>Dictyoglomota</taxon>
        <taxon>Dictyoglomia</taxon>
        <taxon>Dictyoglomales</taxon>
        <taxon>Dictyoglomaceae</taxon>
        <taxon>Dictyoglomus</taxon>
    </lineage>
</organism>
<comment type="function">
    <text evidence="1">Specifically methylates position 2 of adenine 2503 in 23S rRNA and position 2 of adenine 37 in tRNAs.</text>
</comment>
<comment type="catalytic activity">
    <reaction evidence="1">
        <text>adenosine(2503) in 23S rRNA + 2 reduced [2Fe-2S]-[ferredoxin] + 2 S-adenosyl-L-methionine = 2-methyladenosine(2503) in 23S rRNA + 5'-deoxyadenosine + L-methionine + 2 oxidized [2Fe-2S]-[ferredoxin] + S-adenosyl-L-homocysteine</text>
        <dbReference type="Rhea" id="RHEA:42916"/>
        <dbReference type="Rhea" id="RHEA-COMP:10000"/>
        <dbReference type="Rhea" id="RHEA-COMP:10001"/>
        <dbReference type="Rhea" id="RHEA-COMP:10152"/>
        <dbReference type="Rhea" id="RHEA-COMP:10282"/>
        <dbReference type="ChEBI" id="CHEBI:17319"/>
        <dbReference type="ChEBI" id="CHEBI:33737"/>
        <dbReference type="ChEBI" id="CHEBI:33738"/>
        <dbReference type="ChEBI" id="CHEBI:57844"/>
        <dbReference type="ChEBI" id="CHEBI:57856"/>
        <dbReference type="ChEBI" id="CHEBI:59789"/>
        <dbReference type="ChEBI" id="CHEBI:74411"/>
        <dbReference type="ChEBI" id="CHEBI:74497"/>
        <dbReference type="EC" id="2.1.1.192"/>
    </reaction>
</comment>
<comment type="catalytic activity">
    <reaction evidence="1">
        <text>adenosine(37) in tRNA + 2 reduced [2Fe-2S]-[ferredoxin] + 2 S-adenosyl-L-methionine = 2-methyladenosine(37) in tRNA + 5'-deoxyadenosine + L-methionine + 2 oxidized [2Fe-2S]-[ferredoxin] + S-adenosyl-L-homocysteine</text>
        <dbReference type="Rhea" id="RHEA:43332"/>
        <dbReference type="Rhea" id="RHEA-COMP:10000"/>
        <dbReference type="Rhea" id="RHEA-COMP:10001"/>
        <dbReference type="Rhea" id="RHEA-COMP:10162"/>
        <dbReference type="Rhea" id="RHEA-COMP:10485"/>
        <dbReference type="ChEBI" id="CHEBI:17319"/>
        <dbReference type="ChEBI" id="CHEBI:33737"/>
        <dbReference type="ChEBI" id="CHEBI:33738"/>
        <dbReference type="ChEBI" id="CHEBI:57844"/>
        <dbReference type="ChEBI" id="CHEBI:57856"/>
        <dbReference type="ChEBI" id="CHEBI:59789"/>
        <dbReference type="ChEBI" id="CHEBI:74411"/>
        <dbReference type="ChEBI" id="CHEBI:74497"/>
        <dbReference type="EC" id="2.1.1.192"/>
    </reaction>
</comment>
<comment type="cofactor">
    <cofactor evidence="1">
        <name>[4Fe-4S] cluster</name>
        <dbReference type="ChEBI" id="CHEBI:49883"/>
    </cofactor>
    <text evidence="1">Binds 1 [4Fe-4S] cluster. The cluster is coordinated with 3 cysteines and an exchangeable S-adenosyl-L-methionine.</text>
</comment>
<comment type="subcellular location">
    <subcellularLocation>
        <location evidence="1">Cytoplasm</location>
    </subcellularLocation>
</comment>
<comment type="miscellaneous">
    <text evidence="1">Reaction proceeds by a ping-pong mechanism involving intermediate methylation of a conserved cysteine residue.</text>
</comment>
<comment type="similarity">
    <text evidence="1">Belongs to the radical SAM superfamily. RlmN family.</text>
</comment>
<accession>B5YF42</accession>
<feature type="chain" id="PRO_1000188566" description="Probable dual-specificity RNA methyltransferase RlmN">
    <location>
        <begin position="1"/>
        <end position="348"/>
    </location>
</feature>
<feature type="domain" description="Radical SAM core" evidence="2">
    <location>
        <begin position="95"/>
        <end position="328"/>
    </location>
</feature>
<feature type="active site" description="Proton acceptor" evidence="1">
    <location>
        <position position="89"/>
    </location>
</feature>
<feature type="active site" description="S-methylcysteine intermediate" evidence="1">
    <location>
        <position position="333"/>
    </location>
</feature>
<feature type="binding site" evidence="1">
    <location>
        <position position="109"/>
    </location>
    <ligand>
        <name>[4Fe-4S] cluster</name>
        <dbReference type="ChEBI" id="CHEBI:49883"/>
        <note>4Fe-4S-S-AdoMet</note>
    </ligand>
</feature>
<feature type="binding site" evidence="1">
    <location>
        <position position="113"/>
    </location>
    <ligand>
        <name>[4Fe-4S] cluster</name>
        <dbReference type="ChEBI" id="CHEBI:49883"/>
        <note>4Fe-4S-S-AdoMet</note>
    </ligand>
</feature>
<feature type="binding site" evidence="1">
    <location>
        <position position="116"/>
    </location>
    <ligand>
        <name>[4Fe-4S] cluster</name>
        <dbReference type="ChEBI" id="CHEBI:49883"/>
        <note>4Fe-4S-S-AdoMet</note>
    </ligand>
</feature>
<feature type="binding site" evidence="1">
    <location>
        <begin position="159"/>
        <end position="160"/>
    </location>
    <ligand>
        <name>S-adenosyl-L-methionine</name>
        <dbReference type="ChEBI" id="CHEBI:59789"/>
    </ligand>
</feature>
<feature type="binding site" evidence="1">
    <location>
        <position position="191"/>
    </location>
    <ligand>
        <name>S-adenosyl-L-methionine</name>
        <dbReference type="ChEBI" id="CHEBI:59789"/>
    </ligand>
</feature>
<feature type="binding site" evidence="1">
    <location>
        <begin position="214"/>
        <end position="216"/>
    </location>
    <ligand>
        <name>S-adenosyl-L-methionine</name>
        <dbReference type="ChEBI" id="CHEBI:59789"/>
    </ligand>
</feature>
<feature type="binding site" evidence="1">
    <location>
        <position position="290"/>
    </location>
    <ligand>
        <name>S-adenosyl-L-methionine</name>
        <dbReference type="ChEBI" id="CHEBI:59789"/>
    </ligand>
</feature>
<feature type="disulfide bond" description="(transient)" evidence="1">
    <location>
        <begin position="102"/>
        <end position="333"/>
    </location>
</feature>
<evidence type="ECO:0000255" key="1">
    <source>
        <dbReference type="HAMAP-Rule" id="MF_01849"/>
    </source>
</evidence>
<evidence type="ECO:0000255" key="2">
    <source>
        <dbReference type="PROSITE-ProRule" id="PRU01266"/>
    </source>
</evidence>
<gene>
    <name evidence="1" type="primary">rlmN</name>
    <name type="ordered locus">DICTH_1331</name>
</gene>